<proteinExistence type="inferred from homology"/>
<reference key="1">
    <citation type="submission" date="2006-06" db="EMBL/GenBank/DDBJ databases">
        <title>Complete sequence of Pseudoalteromonas atlantica T6c.</title>
        <authorList>
            <consortium name="US DOE Joint Genome Institute"/>
            <person name="Copeland A."/>
            <person name="Lucas S."/>
            <person name="Lapidus A."/>
            <person name="Barry K."/>
            <person name="Detter J.C."/>
            <person name="Glavina del Rio T."/>
            <person name="Hammon N."/>
            <person name="Israni S."/>
            <person name="Dalin E."/>
            <person name="Tice H."/>
            <person name="Pitluck S."/>
            <person name="Saunders E."/>
            <person name="Brettin T."/>
            <person name="Bruce D."/>
            <person name="Han C."/>
            <person name="Tapia R."/>
            <person name="Gilna P."/>
            <person name="Schmutz J."/>
            <person name="Larimer F."/>
            <person name="Land M."/>
            <person name="Hauser L."/>
            <person name="Kyrpides N."/>
            <person name="Kim E."/>
            <person name="Karls A.C."/>
            <person name="Bartlett D."/>
            <person name="Higgins B.P."/>
            <person name="Richardson P."/>
        </authorList>
    </citation>
    <scope>NUCLEOTIDE SEQUENCE [LARGE SCALE GENOMIC DNA]</scope>
    <source>
        <strain>T6c / ATCC BAA-1087</strain>
    </source>
</reference>
<feature type="chain" id="PRO_1000011038" description="N-acetyl-gamma-glutamyl-phosphate reductase">
    <location>
        <begin position="1"/>
        <end position="342"/>
    </location>
</feature>
<feature type="active site" evidence="1">
    <location>
        <position position="156"/>
    </location>
</feature>
<keyword id="KW-0028">Amino-acid biosynthesis</keyword>
<keyword id="KW-0055">Arginine biosynthesis</keyword>
<keyword id="KW-0963">Cytoplasm</keyword>
<keyword id="KW-0521">NADP</keyword>
<keyword id="KW-0560">Oxidoreductase</keyword>
<protein>
    <recommendedName>
        <fullName evidence="1">N-acetyl-gamma-glutamyl-phosphate reductase</fullName>
        <shortName evidence="1">AGPR</shortName>
        <ecNumber evidence="1">1.2.1.38</ecNumber>
    </recommendedName>
    <alternativeName>
        <fullName evidence="1">N-acetyl-glutamate semialdehyde dehydrogenase</fullName>
        <shortName evidence="1">NAGSA dehydrogenase</shortName>
    </alternativeName>
</protein>
<name>ARGC_PSEA6</name>
<sequence length="342" mass="36804">MIKTCIVGASGYTGAELASLIHRHPRFELNALYVSAKSQDADKKLGDVHGYLFGQINLPLIPLTDDVLHSLSNEMDVIFLATPHEASHDWMPVLSSGKAKVFDLSGAFRLKDQQVFADYYGFAHEQAASLKQAVYGLADWFAEDIKSADIIAVPGCYPTASLSALKPLHEAGLIADGHLPIINAVSGVSGAGRKAAMGSSFCEVSLQAYGVLGHRHQPEISAYLGREVIFTPHLGNFKRGILATITVKVNADVDAGAVANAFSHAYQNHPIVRIRDTWPKLDDVVGTPHCDLFWKLDTQKGYLVVTSAIDNLLKGAASQAVQCANLRFGFASQLGLVHEVSA</sequence>
<accession>Q15X80</accession>
<evidence type="ECO:0000255" key="1">
    <source>
        <dbReference type="HAMAP-Rule" id="MF_00150"/>
    </source>
</evidence>
<gene>
    <name evidence="1" type="primary">argC</name>
    <name type="ordered locus">Patl_0982</name>
</gene>
<dbReference type="EC" id="1.2.1.38" evidence="1"/>
<dbReference type="EMBL" id="CP000388">
    <property type="protein sequence ID" value="ABG39508.1"/>
    <property type="molecule type" value="Genomic_DNA"/>
</dbReference>
<dbReference type="RefSeq" id="WP_011573865.1">
    <property type="nucleotide sequence ID" value="NC_008228.1"/>
</dbReference>
<dbReference type="SMR" id="Q15X80"/>
<dbReference type="STRING" id="342610.Patl_0982"/>
<dbReference type="KEGG" id="pat:Patl_0982"/>
<dbReference type="eggNOG" id="COG0002">
    <property type="taxonomic scope" value="Bacteria"/>
</dbReference>
<dbReference type="HOGENOM" id="CLU_006384_0_1_6"/>
<dbReference type="OrthoDB" id="9801289at2"/>
<dbReference type="UniPathway" id="UPA00068">
    <property type="reaction ID" value="UER00108"/>
</dbReference>
<dbReference type="Proteomes" id="UP000001981">
    <property type="component" value="Chromosome"/>
</dbReference>
<dbReference type="GO" id="GO:0005737">
    <property type="term" value="C:cytoplasm"/>
    <property type="evidence" value="ECO:0007669"/>
    <property type="project" value="UniProtKB-SubCell"/>
</dbReference>
<dbReference type="GO" id="GO:0003942">
    <property type="term" value="F:N-acetyl-gamma-glutamyl-phosphate reductase activity"/>
    <property type="evidence" value="ECO:0007669"/>
    <property type="project" value="UniProtKB-UniRule"/>
</dbReference>
<dbReference type="GO" id="GO:0051287">
    <property type="term" value="F:NAD binding"/>
    <property type="evidence" value="ECO:0007669"/>
    <property type="project" value="InterPro"/>
</dbReference>
<dbReference type="GO" id="GO:0070401">
    <property type="term" value="F:NADP+ binding"/>
    <property type="evidence" value="ECO:0007669"/>
    <property type="project" value="InterPro"/>
</dbReference>
<dbReference type="GO" id="GO:0006526">
    <property type="term" value="P:L-arginine biosynthetic process"/>
    <property type="evidence" value="ECO:0007669"/>
    <property type="project" value="UniProtKB-UniRule"/>
</dbReference>
<dbReference type="CDD" id="cd23934">
    <property type="entry name" value="AGPR_1_C"/>
    <property type="match status" value="1"/>
</dbReference>
<dbReference type="CDD" id="cd17895">
    <property type="entry name" value="AGPR_1_N"/>
    <property type="match status" value="1"/>
</dbReference>
<dbReference type="FunFam" id="3.30.360.10:FF:000014">
    <property type="entry name" value="N-acetyl-gamma-glutamyl-phosphate reductase"/>
    <property type="match status" value="1"/>
</dbReference>
<dbReference type="Gene3D" id="3.30.360.10">
    <property type="entry name" value="Dihydrodipicolinate Reductase, domain 2"/>
    <property type="match status" value="1"/>
</dbReference>
<dbReference type="Gene3D" id="3.40.50.720">
    <property type="entry name" value="NAD(P)-binding Rossmann-like Domain"/>
    <property type="match status" value="1"/>
</dbReference>
<dbReference type="HAMAP" id="MF_00150">
    <property type="entry name" value="ArgC_type1"/>
    <property type="match status" value="1"/>
</dbReference>
<dbReference type="InterPro" id="IPR023013">
    <property type="entry name" value="AGPR_AS"/>
</dbReference>
<dbReference type="InterPro" id="IPR000706">
    <property type="entry name" value="AGPR_type-1"/>
</dbReference>
<dbReference type="InterPro" id="IPR036291">
    <property type="entry name" value="NAD(P)-bd_dom_sf"/>
</dbReference>
<dbReference type="InterPro" id="IPR050085">
    <property type="entry name" value="NAGSA_dehydrogenase"/>
</dbReference>
<dbReference type="InterPro" id="IPR000534">
    <property type="entry name" value="Semialdehyde_DH_NAD-bd"/>
</dbReference>
<dbReference type="NCBIfam" id="TIGR01850">
    <property type="entry name" value="argC"/>
    <property type="match status" value="1"/>
</dbReference>
<dbReference type="PANTHER" id="PTHR32338:SF10">
    <property type="entry name" value="N-ACETYL-GAMMA-GLUTAMYL-PHOSPHATE REDUCTASE, CHLOROPLASTIC-RELATED"/>
    <property type="match status" value="1"/>
</dbReference>
<dbReference type="PANTHER" id="PTHR32338">
    <property type="entry name" value="N-ACETYL-GAMMA-GLUTAMYL-PHOSPHATE REDUCTASE, CHLOROPLASTIC-RELATED-RELATED"/>
    <property type="match status" value="1"/>
</dbReference>
<dbReference type="Pfam" id="PF01118">
    <property type="entry name" value="Semialdhyde_dh"/>
    <property type="match status" value="1"/>
</dbReference>
<dbReference type="Pfam" id="PF22698">
    <property type="entry name" value="Semialdhyde_dhC_1"/>
    <property type="match status" value="1"/>
</dbReference>
<dbReference type="SMART" id="SM00859">
    <property type="entry name" value="Semialdhyde_dh"/>
    <property type="match status" value="1"/>
</dbReference>
<dbReference type="SUPFAM" id="SSF55347">
    <property type="entry name" value="Glyceraldehyde-3-phosphate dehydrogenase-like, C-terminal domain"/>
    <property type="match status" value="1"/>
</dbReference>
<dbReference type="SUPFAM" id="SSF51735">
    <property type="entry name" value="NAD(P)-binding Rossmann-fold domains"/>
    <property type="match status" value="1"/>
</dbReference>
<dbReference type="PROSITE" id="PS01224">
    <property type="entry name" value="ARGC"/>
    <property type="match status" value="1"/>
</dbReference>
<comment type="function">
    <text evidence="1">Catalyzes the NADPH-dependent reduction of N-acetyl-5-glutamyl phosphate to yield N-acetyl-L-glutamate 5-semialdehyde.</text>
</comment>
<comment type="catalytic activity">
    <reaction evidence="1">
        <text>N-acetyl-L-glutamate 5-semialdehyde + phosphate + NADP(+) = N-acetyl-L-glutamyl 5-phosphate + NADPH + H(+)</text>
        <dbReference type="Rhea" id="RHEA:21588"/>
        <dbReference type="ChEBI" id="CHEBI:15378"/>
        <dbReference type="ChEBI" id="CHEBI:29123"/>
        <dbReference type="ChEBI" id="CHEBI:43474"/>
        <dbReference type="ChEBI" id="CHEBI:57783"/>
        <dbReference type="ChEBI" id="CHEBI:57936"/>
        <dbReference type="ChEBI" id="CHEBI:58349"/>
        <dbReference type="EC" id="1.2.1.38"/>
    </reaction>
</comment>
<comment type="pathway">
    <text evidence="1">Amino-acid biosynthesis; L-arginine biosynthesis; N(2)-acetyl-L-ornithine from L-glutamate: step 3/4.</text>
</comment>
<comment type="subcellular location">
    <subcellularLocation>
        <location evidence="1">Cytoplasm</location>
    </subcellularLocation>
</comment>
<comment type="similarity">
    <text evidence="1">Belongs to the NAGSA dehydrogenase family. Type 1 subfamily.</text>
</comment>
<organism>
    <name type="scientific">Pseudoalteromonas atlantica (strain T6c / ATCC BAA-1087)</name>
    <dbReference type="NCBI Taxonomy" id="3042615"/>
    <lineage>
        <taxon>Bacteria</taxon>
        <taxon>Pseudomonadati</taxon>
        <taxon>Pseudomonadota</taxon>
        <taxon>Gammaproteobacteria</taxon>
        <taxon>Alteromonadales</taxon>
        <taxon>Alteromonadaceae</taxon>
        <taxon>Paraglaciecola</taxon>
    </lineage>
</organism>